<protein>
    <recommendedName>
        <fullName evidence="1">tRNA dimethylallyltransferase</fullName>
        <ecNumber evidence="1">2.5.1.75</ecNumber>
    </recommendedName>
    <alternativeName>
        <fullName evidence="1">Dimethylallyl diphosphate:tRNA dimethylallyltransferase</fullName>
        <shortName evidence="1">DMAPP:tRNA dimethylallyltransferase</shortName>
        <shortName evidence="1">DMATase</shortName>
    </alternativeName>
    <alternativeName>
        <fullName evidence="1">Isopentenyl-diphosphate:tRNA isopentenyltransferase</fullName>
        <shortName evidence="1">IPP transferase</shortName>
        <shortName evidence="1">IPPT</shortName>
        <shortName evidence="1">IPTase</shortName>
    </alternativeName>
</protein>
<name>MIAA_KOCRD</name>
<keyword id="KW-0067">ATP-binding</keyword>
<keyword id="KW-0460">Magnesium</keyword>
<keyword id="KW-0547">Nucleotide-binding</keyword>
<keyword id="KW-1185">Reference proteome</keyword>
<keyword id="KW-0808">Transferase</keyword>
<keyword id="KW-0819">tRNA processing</keyword>
<evidence type="ECO:0000255" key="1">
    <source>
        <dbReference type="HAMAP-Rule" id="MF_00185"/>
    </source>
</evidence>
<organism>
    <name type="scientific">Kocuria rhizophila (strain ATCC 9341 / DSM 348 / NBRC 103217 / DC2201)</name>
    <dbReference type="NCBI Taxonomy" id="378753"/>
    <lineage>
        <taxon>Bacteria</taxon>
        <taxon>Bacillati</taxon>
        <taxon>Actinomycetota</taxon>
        <taxon>Actinomycetes</taxon>
        <taxon>Micrococcales</taxon>
        <taxon>Micrococcaceae</taxon>
        <taxon>Kocuria</taxon>
    </lineage>
</organism>
<gene>
    <name evidence="1" type="primary">miaA</name>
    <name type="ordered locus">KRH_15810</name>
</gene>
<proteinExistence type="inferred from homology"/>
<sequence>MSAPDAGREDTRIPLVAVVGPTGTGKSELAIALARELDGEVVNADALQLYRGMDVGTAKLTPEERQGVPHHLLDVLEIHEEASVAAFQRDARRAVDEIRGRGRVPVLVGGSGLYVRAALDAIEFPGTDATVRARREEQLRERGRAALLRELAAVDPGSAERVKDDRRLVRALEVHDLTGRPFTSFMPERRYVQPTVQIGLAMDREVLNRRLAHRVDLMLERGWLEEVKALEARGLRESPTAGRALGYPQLLAVLDGSATLDEAREDTVAATRRFTKRQRTWFGADPRVHWLDAGDPNGIDGLTAGAVRLVAAQ</sequence>
<comment type="function">
    <text evidence="1">Catalyzes the transfer of a dimethylallyl group onto the adenine at position 37 in tRNAs that read codons beginning with uridine, leading to the formation of N6-(dimethylallyl)adenosine (i(6)A).</text>
</comment>
<comment type="catalytic activity">
    <reaction evidence="1">
        <text>adenosine(37) in tRNA + dimethylallyl diphosphate = N(6)-dimethylallyladenosine(37) in tRNA + diphosphate</text>
        <dbReference type="Rhea" id="RHEA:26482"/>
        <dbReference type="Rhea" id="RHEA-COMP:10162"/>
        <dbReference type="Rhea" id="RHEA-COMP:10375"/>
        <dbReference type="ChEBI" id="CHEBI:33019"/>
        <dbReference type="ChEBI" id="CHEBI:57623"/>
        <dbReference type="ChEBI" id="CHEBI:74411"/>
        <dbReference type="ChEBI" id="CHEBI:74415"/>
        <dbReference type="EC" id="2.5.1.75"/>
    </reaction>
</comment>
<comment type="cofactor">
    <cofactor evidence="1">
        <name>Mg(2+)</name>
        <dbReference type="ChEBI" id="CHEBI:18420"/>
    </cofactor>
</comment>
<comment type="subunit">
    <text evidence="1">Monomer.</text>
</comment>
<comment type="similarity">
    <text evidence="1">Belongs to the IPP transferase family.</text>
</comment>
<reference key="1">
    <citation type="journal article" date="2008" name="J. Bacteriol.">
        <title>Complete genome sequence of the soil actinomycete Kocuria rhizophila.</title>
        <authorList>
            <person name="Takarada H."/>
            <person name="Sekine M."/>
            <person name="Kosugi H."/>
            <person name="Matsuo Y."/>
            <person name="Fujisawa T."/>
            <person name="Omata S."/>
            <person name="Kishi E."/>
            <person name="Shimizu A."/>
            <person name="Tsukatani N."/>
            <person name="Tanikawa S."/>
            <person name="Fujita N."/>
            <person name="Harayama S."/>
        </authorList>
    </citation>
    <scope>NUCLEOTIDE SEQUENCE [LARGE SCALE GENOMIC DNA]</scope>
    <source>
        <strain>ATCC 9341 / DSM 348 / NBRC 103217 / DC2201</strain>
    </source>
</reference>
<accession>B2GKG9</accession>
<feature type="chain" id="PRO_0000377195" description="tRNA dimethylallyltransferase">
    <location>
        <begin position="1"/>
        <end position="313"/>
    </location>
</feature>
<feature type="binding site" evidence="1">
    <location>
        <begin position="20"/>
        <end position="27"/>
    </location>
    <ligand>
        <name>ATP</name>
        <dbReference type="ChEBI" id="CHEBI:30616"/>
    </ligand>
</feature>
<feature type="binding site" evidence="1">
    <location>
        <begin position="22"/>
        <end position="27"/>
    </location>
    <ligand>
        <name>substrate</name>
    </ligand>
</feature>
<feature type="site" description="Interaction with substrate tRNA" evidence="1">
    <location>
        <position position="111"/>
    </location>
</feature>
<feature type="site" description="Interaction with substrate tRNA" evidence="1">
    <location>
        <position position="132"/>
    </location>
</feature>
<dbReference type="EC" id="2.5.1.75" evidence="1"/>
<dbReference type="EMBL" id="AP009152">
    <property type="protein sequence ID" value="BAG29928.1"/>
    <property type="molecule type" value="Genomic_DNA"/>
</dbReference>
<dbReference type="RefSeq" id="WP_012398649.1">
    <property type="nucleotide sequence ID" value="NC_010617.1"/>
</dbReference>
<dbReference type="SMR" id="B2GKG9"/>
<dbReference type="STRING" id="378753.KRH_15810"/>
<dbReference type="KEGG" id="krh:KRH_15810"/>
<dbReference type="eggNOG" id="COG0324">
    <property type="taxonomic scope" value="Bacteria"/>
</dbReference>
<dbReference type="HOGENOM" id="CLU_032616_0_1_11"/>
<dbReference type="OrthoDB" id="9776390at2"/>
<dbReference type="Proteomes" id="UP000008838">
    <property type="component" value="Chromosome"/>
</dbReference>
<dbReference type="GO" id="GO:0005524">
    <property type="term" value="F:ATP binding"/>
    <property type="evidence" value="ECO:0007669"/>
    <property type="project" value="UniProtKB-UniRule"/>
</dbReference>
<dbReference type="GO" id="GO:0052381">
    <property type="term" value="F:tRNA dimethylallyltransferase activity"/>
    <property type="evidence" value="ECO:0007669"/>
    <property type="project" value="UniProtKB-UniRule"/>
</dbReference>
<dbReference type="GO" id="GO:0006400">
    <property type="term" value="P:tRNA modification"/>
    <property type="evidence" value="ECO:0007669"/>
    <property type="project" value="TreeGrafter"/>
</dbReference>
<dbReference type="Gene3D" id="1.10.20.140">
    <property type="match status" value="1"/>
</dbReference>
<dbReference type="Gene3D" id="3.40.50.300">
    <property type="entry name" value="P-loop containing nucleotide triphosphate hydrolases"/>
    <property type="match status" value="1"/>
</dbReference>
<dbReference type="HAMAP" id="MF_00185">
    <property type="entry name" value="IPP_trans"/>
    <property type="match status" value="1"/>
</dbReference>
<dbReference type="InterPro" id="IPR039657">
    <property type="entry name" value="Dimethylallyltransferase"/>
</dbReference>
<dbReference type="InterPro" id="IPR018022">
    <property type="entry name" value="IPT"/>
</dbReference>
<dbReference type="InterPro" id="IPR027417">
    <property type="entry name" value="P-loop_NTPase"/>
</dbReference>
<dbReference type="NCBIfam" id="TIGR00174">
    <property type="entry name" value="miaA"/>
    <property type="match status" value="1"/>
</dbReference>
<dbReference type="PANTHER" id="PTHR11088">
    <property type="entry name" value="TRNA DIMETHYLALLYLTRANSFERASE"/>
    <property type="match status" value="1"/>
</dbReference>
<dbReference type="PANTHER" id="PTHR11088:SF60">
    <property type="entry name" value="TRNA DIMETHYLALLYLTRANSFERASE"/>
    <property type="match status" value="1"/>
</dbReference>
<dbReference type="Pfam" id="PF01715">
    <property type="entry name" value="IPPT"/>
    <property type="match status" value="1"/>
</dbReference>
<dbReference type="SUPFAM" id="SSF52540">
    <property type="entry name" value="P-loop containing nucleoside triphosphate hydrolases"/>
    <property type="match status" value="1"/>
</dbReference>